<protein>
    <recommendedName>
        <fullName evidence="1">Large ribosomal subunit protein eL27</fullName>
    </recommendedName>
    <alternativeName>
        <fullName>60S ribosomal protein L27</fullName>
    </alternativeName>
</protein>
<comment type="similarity">
    <text evidence="1">Belongs to the eukaryotic ribosomal protein eL27 family.</text>
</comment>
<keyword id="KW-1185">Reference proteome</keyword>
<keyword id="KW-0687">Ribonucleoprotein</keyword>
<keyword id="KW-0689">Ribosomal protein</keyword>
<feature type="chain" id="PRO_0000126087" description="Large ribosomal subunit protein eL27">
    <location>
        <begin position="1"/>
        <end position="138"/>
    </location>
</feature>
<organism>
    <name type="scientific">Solanum tuberosum</name>
    <name type="common">Potato</name>
    <dbReference type="NCBI Taxonomy" id="4113"/>
    <lineage>
        <taxon>Eukaryota</taxon>
        <taxon>Viridiplantae</taxon>
        <taxon>Streptophyta</taxon>
        <taxon>Embryophyta</taxon>
        <taxon>Tracheophyta</taxon>
        <taxon>Spermatophyta</taxon>
        <taxon>Magnoliopsida</taxon>
        <taxon>eudicotyledons</taxon>
        <taxon>Gunneridae</taxon>
        <taxon>Pentapetalae</taxon>
        <taxon>asterids</taxon>
        <taxon>lamiids</taxon>
        <taxon>Solanales</taxon>
        <taxon>Solanaceae</taxon>
        <taxon>Solanoideae</taxon>
        <taxon>Solaneae</taxon>
        <taxon>Solanum</taxon>
    </lineage>
</organism>
<dbReference type="EMBL" id="Z30162">
    <property type="protein sequence ID" value="CAB57298.1"/>
    <property type="molecule type" value="mRNA"/>
</dbReference>
<dbReference type="SMR" id="P41101"/>
<dbReference type="STRING" id="4113.P41101"/>
<dbReference type="PaxDb" id="4113-PGSC0003DMT400069185"/>
<dbReference type="eggNOG" id="KOG3418">
    <property type="taxonomic scope" value="Eukaryota"/>
</dbReference>
<dbReference type="InParanoid" id="P41101"/>
<dbReference type="Proteomes" id="UP000011115">
    <property type="component" value="Unassembled WGS sequence"/>
</dbReference>
<dbReference type="ExpressionAtlas" id="P41101">
    <property type="expression patterns" value="baseline and differential"/>
</dbReference>
<dbReference type="GO" id="GO:0022625">
    <property type="term" value="C:cytosolic large ribosomal subunit"/>
    <property type="evidence" value="ECO:0000318"/>
    <property type="project" value="GO_Central"/>
</dbReference>
<dbReference type="GO" id="GO:0003735">
    <property type="term" value="F:structural constituent of ribosome"/>
    <property type="evidence" value="ECO:0000318"/>
    <property type="project" value="GO_Central"/>
</dbReference>
<dbReference type="GO" id="GO:0006412">
    <property type="term" value="P:translation"/>
    <property type="evidence" value="ECO:0007669"/>
    <property type="project" value="InterPro"/>
</dbReference>
<dbReference type="CDD" id="cd06090">
    <property type="entry name" value="KOW_RPL27"/>
    <property type="match status" value="1"/>
</dbReference>
<dbReference type="FunFam" id="2.30.30.770:FF:000001">
    <property type="entry name" value="60S ribosomal protein L27"/>
    <property type="match status" value="1"/>
</dbReference>
<dbReference type="Gene3D" id="2.30.30.770">
    <property type="match status" value="1"/>
</dbReference>
<dbReference type="InterPro" id="IPR001141">
    <property type="entry name" value="Ribosomal_eL27"/>
</dbReference>
<dbReference type="InterPro" id="IPR018262">
    <property type="entry name" value="Ribosomal_eL27_CS"/>
</dbReference>
<dbReference type="InterPro" id="IPR041991">
    <property type="entry name" value="Ribosomal_eL27_KOW"/>
</dbReference>
<dbReference type="InterPro" id="IPR038655">
    <property type="entry name" value="Ribosomal_eL27_sf"/>
</dbReference>
<dbReference type="InterPro" id="IPR008991">
    <property type="entry name" value="Translation_prot_SH3-like_sf"/>
</dbReference>
<dbReference type="PANTHER" id="PTHR10497">
    <property type="entry name" value="60S RIBOSOMAL PROTEIN L27"/>
    <property type="match status" value="1"/>
</dbReference>
<dbReference type="Pfam" id="PF01777">
    <property type="entry name" value="Ribosomal_L27e"/>
    <property type="match status" value="1"/>
</dbReference>
<dbReference type="SUPFAM" id="SSF50104">
    <property type="entry name" value="Translation proteins SH3-like domain"/>
    <property type="match status" value="1"/>
</dbReference>
<dbReference type="PROSITE" id="PS01107">
    <property type="entry name" value="RIBOSOMAL_L27E"/>
    <property type="match status" value="1"/>
</dbReference>
<sequence>MEKFLKPNKAVILLQGKYAGRKAVIVRAFDEGTRDRPYGHCLVAGISRYPKKVIRKDSAKKAGKKSRVKAFIKLVNYNHIMPTRYTLDEDLKDVVKDVVNADVLQARDKKVTARRTKARLAERFKTGKNRWFFTKLRF</sequence>
<evidence type="ECO:0000305" key="1"/>
<reference key="1">
    <citation type="journal article" date="1994" name="Plant Physiol.">
        <title>Nucleotide sequence of a cDNA clone for a 60S ribosomal protein L27 gene from potato (Solanum tuberosum L.).</title>
        <authorList>
            <person name="Taylor M.A."/>
            <person name="Davies H.V."/>
        </authorList>
    </citation>
    <scope>NUCLEOTIDE SEQUENCE [MRNA]</scope>
</reference>
<accession>P41101</accession>
<proteinExistence type="evidence at transcript level"/>
<name>RL27_SOLTU</name>
<gene>
    <name type="primary">RPL27</name>
</gene>